<dbReference type="EMBL" id="M81750">
    <property type="protein sequence ID" value="AAA69696.1"/>
    <property type="molecule type" value="mRNA"/>
</dbReference>
<dbReference type="EMBL" id="BC032319">
    <property type="protein sequence ID" value="AAH32319.1"/>
    <property type="molecule type" value="mRNA"/>
</dbReference>
<dbReference type="CCDS" id="CCDS1177.1"/>
<dbReference type="PIR" id="I55525">
    <property type="entry name" value="I55525"/>
</dbReference>
<dbReference type="RefSeq" id="NP_002423.1">
    <property type="nucleotide sequence ID" value="NM_002432.3"/>
</dbReference>
<dbReference type="PDB" id="2DBG">
    <property type="method" value="NMR"/>
    <property type="chains" value="A=1-90"/>
</dbReference>
<dbReference type="PDB" id="5H7Q">
    <property type="method" value="X-ray"/>
    <property type="resolution" value="1.45 A"/>
    <property type="chains" value="A=4-98"/>
</dbReference>
<dbReference type="PDB" id="5WPZ">
    <property type="method" value="X-ray"/>
    <property type="resolution" value="2.00 A"/>
    <property type="chains" value="A/B/C/D/E/F=4-98"/>
</dbReference>
<dbReference type="PDB" id="8I6K">
    <property type="method" value="X-ray"/>
    <property type="resolution" value="2.40 A"/>
    <property type="chains" value="A=199-407"/>
</dbReference>
<dbReference type="PDBsum" id="2DBG"/>
<dbReference type="PDBsum" id="5H7Q"/>
<dbReference type="PDBsum" id="5WPZ"/>
<dbReference type="PDBsum" id="8I6K"/>
<dbReference type="SMR" id="P41218"/>
<dbReference type="BioGRID" id="110475">
    <property type="interactions" value="186"/>
</dbReference>
<dbReference type="FunCoup" id="P41218">
    <property type="interactions" value="17"/>
</dbReference>
<dbReference type="IntAct" id="P41218">
    <property type="interactions" value="189"/>
</dbReference>
<dbReference type="MINT" id="P41218"/>
<dbReference type="STRING" id="9606.ENSP00000357123"/>
<dbReference type="GlyGen" id="P41218">
    <property type="glycosylation" value="3 sites, 1 N-linked glycan (1 site), 1 O-linked glycan (1 site)"/>
</dbReference>
<dbReference type="iPTMnet" id="P41218"/>
<dbReference type="PhosphoSitePlus" id="P41218"/>
<dbReference type="BioMuta" id="MNDA"/>
<dbReference type="DMDM" id="730038"/>
<dbReference type="MassIVE" id="P41218"/>
<dbReference type="PaxDb" id="9606-ENSP00000357123"/>
<dbReference type="PeptideAtlas" id="P41218"/>
<dbReference type="PRIDE" id="P41218"/>
<dbReference type="ProteomicsDB" id="55422"/>
<dbReference type="Pumba" id="P41218"/>
<dbReference type="Antibodypedia" id="34254">
    <property type="antibodies" value="325 antibodies from 30 providers"/>
</dbReference>
<dbReference type="DNASU" id="4332"/>
<dbReference type="Ensembl" id="ENST00000368141.5">
    <property type="protein sequence ID" value="ENSP00000357123.4"/>
    <property type="gene ID" value="ENSG00000163563.8"/>
</dbReference>
<dbReference type="GeneID" id="4332"/>
<dbReference type="KEGG" id="hsa:4332"/>
<dbReference type="MANE-Select" id="ENST00000368141.5">
    <property type="protein sequence ID" value="ENSP00000357123.4"/>
    <property type="RefSeq nucleotide sequence ID" value="NM_002432.3"/>
    <property type="RefSeq protein sequence ID" value="NP_002423.1"/>
</dbReference>
<dbReference type="AGR" id="HGNC:7183"/>
<dbReference type="CTD" id="4332"/>
<dbReference type="DisGeNET" id="4332"/>
<dbReference type="GeneCards" id="MNDA"/>
<dbReference type="HGNC" id="HGNC:7183">
    <property type="gene designation" value="MNDA"/>
</dbReference>
<dbReference type="HPA" id="ENSG00000163563">
    <property type="expression patterns" value="Group enriched (bone marrow, lymphoid tissue)"/>
</dbReference>
<dbReference type="MIM" id="159553">
    <property type="type" value="gene"/>
</dbReference>
<dbReference type="neXtProt" id="NX_P41218"/>
<dbReference type="OpenTargets" id="ENSG00000163563"/>
<dbReference type="PharmGKB" id="PA30895"/>
<dbReference type="VEuPathDB" id="HostDB:ENSG00000163563"/>
<dbReference type="eggNOG" id="ENOG502QTQS">
    <property type="taxonomic scope" value="Eukaryota"/>
</dbReference>
<dbReference type="GeneTree" id="ENSGT00390000013296"/>
<dbReference type="HOGENOM" id="CLU_020123_2_0_1"/>
<dbReference type="InParanoid" id="P41218"/>
<dbReference type="OMA" id="HNIKCEE"/>
<dbReference type="OrthoDB" id="9836166at2759"/>
<dbReference type="PAN-GO" id="P41218">
    <property type="GO annotations" value="5 GO annotations based on evolutionary models"/>
</dbReference>
<dbReference type="PhylomeDB" id="P41218"/>
<dbReference type="TreeFam" id="TF337385"/>
<dbReference type="PathwayCommons" id="P41218"/>
<dbReference type="Reactome" id="R-HSA-6798695">
    <property type="pathway name" value="Neutrophil degranulation"/>
</dbReference>
<dbReference type="SignaLink" id="P41218"/>
<dbReference type="BioGRID-ORCS" id="4332">
    <property type="hits" value="9 hits in 1150 CRISPR screens"/>
</dbReference>
<dbReference type="ChiTaRS" id="MNDA">
    <property type="organism name" value="human"/>
</dbReference>
<dbReference type="EvolutionaryTrace" id="P41218"/>
<dbReference type="GeneWiki" id="MNDA"/>
<dbReference type="GenomeRNAi" id="4332"/>
<dbReference type="Pharos" id="P41218">
    <property type="development level" value="Tbio"/>
</dbReference>
<dbReference type="PRO" id="PR:P41218"/>
<dbReference type="Proteomes" id="UP000005640">
    <property type="component" value="Chromosome 1"/>
</dbReference>
<dbReference type="RNAct" id="P41218">
    <property type="molecule type" value="protein"/>
</dbReference>
<dbReference type="Bgee" id="ENSG00000163563">
    <property type="expression patterns" value="Expressed in monocyte and 185 other cell types or tissues"/>
</dbReference>
<dbReference type="ExpressionAtlas" id="P41218">
    <property type="expression patterns" value="baseline and differential"/>
</dbReference>
<dbReference type="GO" id="GO:0035578">
    <property type="term" value="C:azurophil granule lumen"/>
    <property type="evidence" value="ECO:0000304"/>
    <property type="project" value="Reactome"/>
</dbReference>
<dbReference type="GO" id="GO:0005829">
    <property type="term" value="C:cytosol"/>
    <property type="evidence" value="ECO:0000314"/>
    <property type="project" value="HPA"/>
</dbReference>
<dbReference type="GO" id="GO:0070062">
    <property type="term" value="C:extracellular exosome"/>
    <property type="evidence" value="ECO:0007005"/>
    <property type="project" value="UniProtKB"/>
</dbReference>
<dbReference type="GO" id="GO:0005576">
    <property type="term" value="C:extracellular region"/>
    <property type="evidence" value="ECO:0000304"/>
    <property type="project" value="Reactome"/>
</dbReference>
<dbReference type="GO" id="GO:1904813">
    <property type="term" value="C:ficolin-1-rich granule lumen"/>
    <property type="evidence" value="ECO:0000304"/>
    <property type="project" value="Reactome"/>
</dbReference>
<dbReference type="GO" id="GO:0043231">
    <property type="term" value="C:intracellular membrane-bounded organelle"/>
    <property type="evidence" value="ECO:0000314"/>
    <property type="project" value="HPA"/>
</dbReference>
<dbReference type="GO" id="GO:0005730">
    <property type="term" value="C:nucleolus"/>
    <property type="evidence" value="ECO:0000314"/>
    <property type="project" value="HPA"/>
</dbReference>
<dbReference type="GO" id="GO:0005654">
    <property type="term" value="C:nucleoplasm"/>
    <property type="evidence" value="ECO:0000314"/>
    <property type="project" value="HPA"/>
</dbReference>
<dbReference type="GO" id="GO:0003690">
    <property type="term" value="F:double-stranded DNA binding"/>
    <property type="evidence" value="ECO:0000318"/>
    <property type="project" value="GO_Central"/>
</dbReference>
<dbReference type="GO" id="GO:0002218">
    <property type="term" value="P:activation of innate immune response"/>
    <property type="evidence" value="ECO:0000318"/>
    <property type="project" value="GO_Central"/>
</dbReference>
<dbReference type="GO" id="GO:0050853">
    <property type="term" value="P:B cell receptor signaling pathway"/>
    <property type="evidence" value="ECO:0000315"/>
    <property type="project" value="UniProtKB"/>
</dbReference>
<dbReference type="GO" id="GO:0006968">
    <property type="term" value="P:cellular defense response"/>
    <property type="evidence" value="ECO:0000304"/>
    <property type="project" value="ProtInc"/>
</dbReference>
<dbReference type="GO" id="GO:0035458">
    <property type="term" value="P:cellular response to interferon-beta"/>
    <property type="evidence" value="ECO:0000318"/>
    <property type="project" value="GO_Central"/>
</dbReference>
<dbReference type="GO" id="GO:0006974">
    <property type="term" value="P:DNA damage response"/>
    <property type="evidence" value="ECO:0000315"/>
    <property type="project" value="UniProtKB"/>
</dbReference>
<dbReference type="GO" id="GO:0030889">
    <property type="term" value="P:negative regulation of B cell proliferation"/>
    <property type="evidence" value="ECO:0000315"/>
    <property type="project" value="UniProtKB"/>
</dbReference>
<dbReference type="GO" id="GO:0043065">
    <property type="term" value="P:positive regulation of apoptotic process"/>
    <property type="evidence" value="ECO:0000315"/>
    <property type="project" value="UniProtKB"/>
</dbReference>
<dbReference type="CDD" id="cd08305">
    <property type="entry name" value="Pyrin"/>
    <property type="match status" value="1"/>
</dbReference>
<dbReference type="FunFam" id="1.10.533.10:FF:000011">
    <property type="entry name" value="Myeloid cell nuclear differentiation antigen"/>
    <property type="match status" value="1"/>
</dbReference>
<dbReference type="FunFam" id="2.40.50.140:FF:000101">
    <property type="entry name" value="Myeloid cell nuclear differentiation antigen"/>
    <property type="match status" value="1"/>
</dbReference>
<dbReference type="FunFam" id="2.40.50.140:FF:000105">
    <property type="entry name" value="Myeloid cell nuclear differentiation antigen"/>
    <property type="match status" value="1"/>
</dbReference>
<dbReference type="Gene3D" id="1.10.533.10">
    <property type="entry name" value="Death Domain, Fas"/>
    <property type="match status" value="1"/>
</dbReference>
<dbReference type="Gene3D" id="2.40.50.140">
    <property type="entry name" value="Nucleic acid-binding proteins"/>
    <property type="match status" value="2"/>
</dbReference>
<dbReference type="InterPro" id="IPR004020">
    <property type="entry name" value="DAPIN"/>
</dbReference>
<dbReference type="InterPro" id="IPR011029">
    <property type="entry name" value="DEATH-like_dom_sf"/>
</dbReference>
<dbReference type="InterPro" id="IPR040205">
    <property type="entry name" value="HIN-200"/>
</dbReference>
<dbReference type="InterPro" id="IPR004021">
    <property type="entry name" value="HIN200/IF120x"/>
</dbReference>
<dbReference type="InterPro" id="IPR012340">
    <property type="entry name" value="NA-bd_OB-fold"/>
</dbReference>
<dbReference type="PANTHER" id="PTHR12200">
    <property type="entry name" value="INTERFERON-INDUCIBLE PROTEIN AIM2 FAMILY MEMBER"/>
    <property type="match status" value="1"/>
</dbReference>
<dbReference type="PANTHER" id="PTHR12200:SF27">
    <property type="entry name" value="MYELOID CELL NUCLEAR DIFFERENTIATION ANTIGEN"/>
    <property type="match status" value="1"/>
</dbReference>
<dbReference type="Pfam" id="PF02760">
    <property type="entry name" value="HIN"/>
    <property type="match status" value="1"/>
</dbReference>
<dbReference type="Pfam" id="PF02758">
    <property type="entry name" value="PYRIN"/>
    <property type="match status" value="1"/>
</dbReference>
<dbReference type="SMART" id="SM01289">
    <property type="entry name" value="PYRIN"/>
    <property type="match status" value="1"/>
</dbReference>
<dbReference type="SUPFAM" id="SSF159141">
    <property type="entry name" value="HIN-2000 domain-like"/>
    <property type="match status" value="2"/>
</dbReference>
<dbReference type="PROSITE" id="PS50824">
    <property type="entry name" value="DAPIN"/>
    <property type="match status" value="1"/>
</dbReference>
<dbReference type="PROSITE" id="PS50834">
    <property type="entry name" value="HIN_200"/>
    <property type="match status" value="1"/>
</dbReference>
<name>MNDA_HUMAN</name>
<gene>
    <name type="primary">MNDA</name>
</gene>
<protein>
    <recommendedName>
        <fullName>Myeloid cell nuclear differentiation antigen</fullName>
    </recommendedName>
</protein>
<reference key="1">
    <citation type="journal article" date="1992" name="J. Cell. Biochem.">
        <title>Cloning and expression of the human myeloid cell nuclear differentiation antigen: regulation by interferon alpha.</title>
        <authorList>
            <person name="Briggs J.A."/>
            <person name="Burrus G.R."/>
            <person name="Stickney B.D."/>
            <person name="Briggs R.C."/>
        </authorList>
    </citation>
    <scope>NUCLEOTIDE SEQUENCE [MRNA]</scope>
</reference>
<reference key="2">
    <citation type="journal article" date="2004" name="Genome Res.">
        <title>The status, quality, and expansion of the NIH full-length cDNA project: the Mammalian Gene Collection (MGC).</title>
        <authorList>
            <consortium name="The MGC Project Team"/>
        </authorList>
    </citation>
    <scope>NUCLEOTIDE SEQUENCE [LARGE SCALE MRNA]</scope>
    <source>
        <tissue>Pancreas</tissue>
    </source>
</reference>
<reference key="3">
    <citation type="journal article" date="1992" name="J. Cell. Biochem.">
        <title>Characterization of the human myeloid cell nuclear differentiation antigen: relationship to interferon-inducible proteins.</title>
        <authorList>
            <person name="Burrus G.R."/>
            <person name="Briggs J.A."/>
            <person name="Briggs R.C."/>
        </authorList>
    </citation>
    <scope>PARTIAL PROTEIN SEQUENCE</scope>
    <scope>CHARACTERIZATION</scope>
</reference>
<reference key="4">
    <citation type="journal article" date="1994" name="Blood">
        <title>The human myeloid cell nuclear differentiation antigen gene is one of at least two related interferon-inducible genes located on chromosome 1q that are expressed specifically in hematopoietic cells.</title>
        <authorList>
            <person name="Briggs R.C."/>
            <person name="Briggs J.A."/>
            <person name="Ozer J."/>
            <person name="Sealy L."/>
            <person name="Dworkin L.L."/>
            <person name="Kingsmore S.F."/>
            <person name="Seldin M.F."/>
            <person name="Kaur G.P."/>
            <person name="Athwal R.S."/>
            <person name="Dessypris E.N."/>
        </authorList>
    </citation>
    <scope>INDUCTION</scope>
</reference>
<reference key="5">
    <citation type="journal article" date="1994" name="J. Cell. Biochem.">
        <title>Interferon alpha selectively affects expression of the human myeloid cell nuclear differentiation antigen in late stage cells in the monocytic but not the granulocytic lineage.</title>
        <authorList>
            <person name="Briggs R."/>
            <person name="Dworkin L."/>
            <person name="Briggs J."/>
            <person name="Dessypris E."/>
            <person name="Stein J."/>
            <person name="Stein G."/>
            <person name="Lian J."/>
        </authorList>
    </citation>
    <scope>TISSUE SPECIFICITY OF ALPHA-INTERFERON INDUCTION</scope>
</reference>
<reference key="6">
    <citation type="journal article" date="1995" name="Immunogenetics">
        <title>The closely linked genes encoding the myeloid nuclear differentiation antigen (MNDA) and IFI16 exhibit contrasting haemopoietic expression.</title>
        <authorList>
            <person name="Dawson M.J."/>
            <person name="Trapani J.A."/>
            <person name="Briggs R.C."/>
            <person name="Nicholl J.K."/>
            <person name="Sutherland G.R."/>
            <person name="Baker E."/>
        </authorList>
    </citation>
    <scope>CHROMOSOMAL LOCATION</scope>
    <scope>TISSUE SPECIFIC INDUCTION</scope>
</reference>
<reference key="7">
    <citation type="journal article" date="1998" name="J. Cell. Biochem.">
        <title>Human hematopoietic cell specific nuclear protein MNDA interacts with the multifunctional transcription factor YY1 and stimulates YY1 DNA binding.</title>
        <authorList>
            <person name="Xie J."/>
            <person name="Briggs J.A."/>
            <person name="Briggs R.C."/>
        </authorList>
    </citation>
    <scope>INTERACTION</scope>
</reference>
<reference key="8">
    <citation type="submission" date="2006-06" db="PDB data bank">
        <title>Solution structure of the pyrin (PAAD-DAPIN) domain in human myeloid cell nuclear differentiation antigen.</title>
        <authorList>
            <consortium name="RIKEN structural genomics initiative (RSGI)"/>
        </authorList>
    </citation>
    <scope>STRUCTURE BY NMR OF 1-90</scope>
</reference>
<accession>P41218</accession>
<evidence type="ECO:0000255" key="1"/>
<evidence type="ECO:0000255" key="2">
    <source>
        <dbReference type="PROSITE-ProRule" id="PRU00061"/>
    </source>
</evidence>
<evidence type="ECO:0000255" key="3">
    <source>
        <dbReference type="PROSITE-ProRule" id="PRU00106"/>
    </source>
</evidence>
<evidence type="ECO:0000256" key="4">
    <source>
        <dbReference type="SAM" id="MobiDB-lite"/>
    </source>
</evidence>
<evidence type="ECO:0000269" key="5">
    <source>
    </source>
</evidence>
<evidence type="ECO:0000269" key="6">
    <source>
    </source>
</evidence>
<evidence type="ECO:0007829" key="7">
    <source>
        <dbReference type="PDB" id="5H7Q"/>
    </source>
</evidence>
<evidence type="ECO:0007829" key="8">
    <source>
        <dbReference type="PDB" id="8I6K"/>
    </source>
</evidence>
<sequence>MVNEYKKILLLKGFELMDDYHFTSIKSLLAYDLGLTTKMQEEYNRIKITDLMEKKFQGVACLDKLIELAKDMPSLKNLVNNLRKEKSKVAKKIKTQEKAPVKKINQEEVGLAAPAPTARNKLTSEARGRIPVAQKRKTPNKEKTEAKRNKVSQEQSKPPGPSGASTSAAVDHPPLPQTSSSTPSNTSFTPNQETQAQRQVDARRNVPQNDPVTVVVLKATAPFKYESPENGKSTMFHATVASKTQYFHVKVFDINLKEKFVRKKVITISDYSECKGVMEIKEASSVSDFNQNFEVPNRIIEIANKTPKISQLYKQASGTMVYGLFMLQKKSVHKKNTIYEIQDNTGSMDVVGSGKWHNIKCEKGDKLRLFCLQLRTVDRKLKLVCGSHSFIKVIKAKKNKEGPMNVN</sequence>
<organism>
    <name type="scientific">Homo sapiens</name>
    <name type="common">Human</name>
    <dbReference type="NCBI Taxonomy" id="9606"/>
    <lineage>
        <taxon>Eukaryota</taxon>
        <taxon>Metazoa</taxon>
        <taxon>Chordata</taxon>
        <taxon>Craniata</taxon>
        <taxon>Vertebrata</taxon>
        <taxon>Euteleostomi</taxon>
        <taxon>Mammalia</taxon>
        <taxon>Eutheria</taxon>
        <taxon>Euarchontoglires</taxon>
        <taxon>Primates</taxon>
        <taxon>Haplorrhini</taxon>
        <taxon>Catarrhini</taxon>
        <taxon>Hominidae</taxon>
        <taxon>Homo</taxon>
    </lineage>
</organism>
<keyword id="KW-0002">3D-structure</keyword>
<keyword id="KW-0010">Activator</keyword>
<keyword id="KW-0963">Cytoplasm</keyword>
<keyword id="KW-0903">Direct protein sequencing</keyword>
<keyword id="KW-0238">DNA-binding</keyword>
<keyword id="KW-0539">Nucleus</keyword>
<keyword id="KW-1267">Proteomics identification</keyword>
<keyword id="KW-1185">Reference proteome</keyword>
<keyword id="KW-0678">Repressor</keyword>
<keyword id="KW-0804">Transcription</keyword>
<keyword id="KW-0805">Transcription regulation</keyword>
<feature type="chain" id="PRO_0000153724" description="Myeloid cell nuclear differentiation antigen">
    <location>
        <begin position="1"/>
        <end position="407"/>
    </location>
</feature>
<feature type="domain" description="Pyrin" evidence="2">
    <location>
        <begin position="1"/>
        <end position="88"/>
    </location>
</feature>
<feature type="domain" description="HIN-200" evidence="3">
    <location>
        <begin position="196"/>
        <end position="394"/>
    </location>
</feature>
<feature type="region of interest" description="Disordered" evidence="4">
    <location>
        <begin position="108"/>
        <end position="207"/>
    </location>
</feature>
<feature type="short sequence motif" description="Nuclear localization signal" evidence="1">
    <location>
        <begin position="131"/>
        <end position="137"/>
    </location>
</feature>
<feature type="compositionally biased region" description="Basic and acidic residues" evidence="4">
    <location>
        <begin position="139"/>
        <end position="148"/>
    </location>
</feature>
<feature type="compositionally biased region" description="Low complexity" evidence="4">
    <location>
        <begin position="177"/>
        <end position="190"/>
    </location>
</feature>
<feature type="sequence variant" id="VAR_034107" description="In dbSNP:rs35417083.">
    <original>S</original>
    <variation>R</variation>
    <location>
        <position position="156"/>
    </location>
</feature>
<feature type="sequence variant" id="VAR_012055" description="In dbSNP:rs1056771.">
    <original>V</original>
    <variation>L</variation>
    <location>
        <position position="286"/>
    </location>
</feature>
<feature type="sequence variant" id="VAR_020483" description="In dbSNP:rs2276403.">
    <original>H</original>
    <variation>Y</variation>
    <location>
        <position position="357"/>
    </location>
</feature>
<feature type="helix" evidence="7">
    <location>
        <begin position="4"/>
        <end position="12"/>
    </location>
</feature>
<feature type="helix" evidence="7">
    <location>
        <begin position="14"/>
        <end position="16"/>
    </location>
</feature>
<feature type="helix" evidence="7">
    <location>
        <begin position="19"/>
        <end position="33"/>
    </location>
</feature>
<feature type="helix" evidence="7">
    <location>
        <begin position="37"/>
        <end position="42"/>
    </location>
</feature>
<feature type="helix" evidence="7">
    <location>
        <begin position="45"/>
        <end position="55"/>
    </location>
</feature>
<feature type="helix" evidence="7">
    <location>
        <begin position="59"/>
        <end position="69"/>
    </location>
</feature>
<feature type="helix" evidence="7">
    <location>
        <begin position="73"/>
        <end position="75"/>
    </location>
</feature>
<feature type="helix" evidence="7">
    <location>
        <begin position="76"/>
        <end position="95"/>
    </location>
</feature>
<feature type="strand" evidence="8">
    <location>
        <begin position="212"/>
        <end position="219"/>
    </location>
</feature>
<feature type="strand" evidence="8">
    <location>
        <begin position="223"/>
        <end position="225"/>
    </location>
</feature>
<feature type="strand" evidence="8">
    <location>
        <begin position="233"/>
        <end position="241"/>
    </location>
</feature>
<feature type="strand" evidence="8">
    <location>
        <begin position="246"/>
        <end position="251"/>
    </location>
</feature>
<feature type="helix" evidence="8">
    <location>
        <begin position="254"/>
        <end position="256"/>
    </location>
</feature>
<feature type="turn" evidence="8">
    <location>
        <begin position="257"/>
        <end position="259"/>
    </location>
</feature>
<feature type="strand" evidence="8">
    <location>
        <begin position="265"/>
        <end position="268"/>
    </location>
</feature>
<feature type="strand" evidence="8">
    <location>
        <begin position="272"/>
        <end position="274"/>
    </location>
</feature>
<feature type="strand" evidence="8">
    <location>
        <begin position="277"/>
        <end position="280"/>
    </location>
</feature>
<feature type="helix" evidence="8">
    <location>
        <begin position="283"/>
        <end position="285"/>
    </location>
</feature>
<feature type="strand" evidence="8">
    <location>
        <begin position="286"/>
        <end position="288"/>
    </location>
</feature>
<feature type="helix" evidence="8">
    <location>
        <begin position="297"/>
        <end position="304"/>
    </location>
</feature>
<feature type="helix" evidence="8">
    <location>
        <begin position="309"/>
        <end position="312"/>
    </location>
</feature>
<feature type="strand" evidence="8">
    <location>
        <begin position="320"/>
        <end position="332"/>
    </location>
</feature>
<feature type="strand" evidence="8">
    <location>
        <begin position="334"/>
        <end position="343"/>
    </location>
</feature>
<feature type="strand" evidence="8">
    <location>
        <begin position="346"/>
        <end position="353"/>
    </location>
</feature>
<feature type="helix" evidence="8">
    <location>
        <begin position="354"/>
        <end position="356"/>
    </location>
</feature>
<feature type="strand" evidence="8">
    <location>
        <begin position="366"/>
        <end position="377"/>
    </location>
</feature>
<feature type="strand" evidence="8">
    <location>
        <begin position="380"/>
        <end position="384"/>
    </location>
</feature>
<feature type="strand" evidence="8">
    <location>
        <begin position="390"/>
        <end position="394"/>
    </location>
</feature>
<comment type="function">
    <text>May act as a transcriptional activator/repressor in the myeloid lineage. Plays a role in the granulocyte/monocyte cell-specific response to interferon. Stimulates the DNA binding of the transcriptional repressor protein YY1.</text>
</comment>
<comment type="subunit">
    <text>Participates in a ternary complex with YY1 and the YY1 target DNA element. Binds nucleolin and nucleophosmin/NPM/B23.</text>
</comment>
<comment type="interaction">
    <interactant intactId="EBI-2829677">
        <id>P41218</id>
    </interactant>
    <interactant intactId="EBI-640741">
        <id>P01023</id>
        <label>A2M</label>
    </interactant>
    <organismsDiffer>false</organismsDiffer>
    <experiments>3</experiments>
</comment>
<comment type="interaction">
    <interactant intactId="EBI-2829677">
        <id>P41218</id>
    </interactant>
    <interactant intactId="EBI-10968534">
        <id>P50570-2</id>
        <label>DNM2</label>
    </interactant>
    <organismsDiffer>false</organismsDiffer>
    <experiments>3</experiments>
</comment>
<comment type="interaction">
    <interactant intactId="EBI-2829677">
        <id>P41218</id>
    </interactant>
    <interactant intactId="EBI-747754">
        <id>P28799</id>
        <label>GRN</label>
    </interactant>
    <organismsDiffer>false</organismsDiffer>
    <experiments>3</experiments>
</comment>
<comment type="interaction">
    <interactant intactId="EBI-2829677">
        <id>P41218</id>
    </interactant>
    <interactant intactId="EBI-466029">
        <id>P42858</id>
        <label>HTT</label>
    </interactant>
    <organismsDiffer>false</organismsDiffer>
    <experiments>18</experiments>
</comment>
<comment type="interaction">
    <interactant intactId="EBI-2829677">
        <id>P41218</id>
    </interactant>
    <interactant intactId="EBI-399080">
        <id>Q92993</id>
        <label>KAT5</label>
    </interactant>
    <organismsDiffer>false</organismsDiffer>
    <experiments>3</experiments>
</comment>
<comment type="interaction">
    <interactant intactId="EBI-2829677">
        <id>P41218</id>
    </interactant>
    <interactant intactId="EBI-11742507">
        <id>Q8TAP4-4</id>
        <label>LMO3</label>
    </interactant>
    <organismsDiffer>false</organismsDiffer>
    <experiments>3</experiments>
</comment>
<comment type="interaction">
    <interactant intactId="EBI-2829677">
        <id>P41218</id>
    </interactant>
    <interactant intactId="EBI-1039152">
        <id>P08581</id>
        <label>MET</label>
    </interactant>
    <organismsDiffer>false</organismsDiffer>
    <experiments>3</experiments>
</comment>
<comment type="interaction">
    <interactant intactId="EBI-2829677">
        <id>P41218</id>
    </interactant>
    <interactant intactId="EBI-748312">
        <id>P49821</id>
        <label>NDUFV1</label>
    </interactant>
    <organismsDiffer>false</organismsDiffer>
    <experiments>3</experiments>
</comment>
<comment type="interaction">
    <interactant intactId="EBI-2829677">
        <id>P41218</id>
    </interactant>
    <interactant intactId="EBI-3390132">
        <id>Q9BZ95</id>
        <label>NSD3</label>
    </interactant>
    <organismsDiffer>false</organismsDiffer>
    <experiments>2</experiments>
</comment>
<comment type="interaction">
    <interactant intactId="EBI-2829677">
        <id>P41218</id>
    </interactant>
    <interactant intactId="EBI-988601">
        <id>O43933</id>
        <label>PEX1</label>
    </interactant>
    <organismsDiffer>false</organismsDiffer>
    <experiments>3</experiments>
</comment>
<comment type="interaction">
    <interactant intactId="EBI-2829677">
        <id>P41218</id>
    </interactant>
    <interactant intactId="EBI-2010251">
        <id>P49810</id>
        <label>PSEN2</label>
    </interactant>
    <organismsDiffer>false</organismsDiffer>
    <experiments>3</experiments>
</comment>
<comment type="interaction">
    <interactant intactId="EBI-2829677">
        <id>P41218</id>
    </interactant>
    <interactant intactId="EBI-9090795">
        <id>Q15047-2</id>
        <label>SETDB1</label>
    </interactant>
    <organismsDiffer>false</organismsDiffer>
    <experiments>3</experiments>
</comment>
<comment type="interaction">
    <interactant intactId="EBI-2829677">
        <id>P41218</id>
    </interactant>
    <interactant intactId="EBI-25847109">
        <id>O14656-2</id>
        <label>TOR1A</label>
    </interactant>
    <organismsDiffer>false</organismsDiffer>
    <experiments>3</experiments>
</comment>
<comment type="interaction">
    <interactant intactId="EBI-2829677">
        <id>P41218</id>
    </interactant>
    <interactant intactId="EBI-711909">
        <id>P02766</id>
        <label>TTR</label>
    </interactant>
    <organismsDiffer>false</organismsDiffer>
    <experiments>3</experiments>
</comment>
<comment type="interaction">
    <interactant intactId="EBI-2829677">
        <id>P41218</id>
    </interactant>
    <interactant intactId="EBI-359832">
        <id>P61981</id>
        <label>YWHAG</label>
    </interactant>
    <organismsDiffer>false</organismsDiffer>
    <experiments>3</experiments>
</comment>
<comment type="subcellular location">
    <subcellularLocation>
        <location>Nucleus</location>
    </subcellularLocation>
    <subcellularLocation>
        <location>Cytoplasm</location>
    </subcellularLocation>
    <text>Uniformly distributed throughout the interphase cell nucleus. Associates with chromatin.</text>
</comment>
<comment type="tissue specificity">
    <text evidence="6">Expressed constitutively in cells of the myeloid lineage. Found in promyelocyte stage cells as well as in all other stage cells including peripheral blood monocytes and granulocytes. Also appears in myeloblast cells in some cases of acute myeloid Leukemia.</text>
</comment>
<comment type="induction">
    <text evidence="5">Strongly induced by alpha interferon which selectively affects expression in late stage cells in the monocytic but not the granulocytic lineage. Induced in vitro by dimethylsulfoxide and 1,25 dihydroxyvitamin D3.</text>
</comment>
<comment type="domain">
    <text>Its N-terminal half (200 amino acids) is sufficient for maximum enhancement of YY1 DNA binding and a portion of this sequence is responsible for binding YY1.</text>
</comment>
<proteinExistence type="evidence at protein level"/>